<protein>
    <recommendedName>
        <fullName>23 kDa cell wall protein</fullName>
    </recommendedName>
</protein>
<comment type="subcellular location">
    <subcellularLocation>
        <location evidence="1">Secreted</location>
        <location evidence="1">Cell wall</location>
    </subcellularLocation>
</comment>
<accession>P80821</accession>
<proteinExistence type="evidence at protein level"/>
<name>CWP25_SOLLC</name>
<feature type="chain" id="PRO_0000079705" description="23 kDa cell wall protein">
    <location>
        <begin position="1"/>
        <end position="20" status="greater than"/>
    </location>
</feature>
<feature type="non-terminal residue" evidence="2">
    <location>
        <position position="20"/>
    </location>
</feature>
<evidence type="ECO:0000269" key="1">
    <source>
    </source>
</evidence>
<evidence type="ECO:0000303" key="2">
    <source>
    </source>
</evidence>
<evidence type="ECO:0000305" key="3"/>
<dbReference type="InParanoid" id="P80821"/>
<dbReference type="Proteomes" id="UP000004994">
    <property type="component" value="Unplaced"/>
</dbReference>
<dbReference type="GO" id="GO:0005576">
    <property type="term" value="C:extracellular region"/>
    <property type="evidence" value="ECO:0007669"/>
    <property type="project" value="UniProtKB-KW"/>
</dbReference>
<keyword id="KW-0134">Cell wall</keyword>
<keyword id="KW-0903">Direct protein sequencing</keyword>
<keyword id="KW-1185">Reference proteome</keyword>
<keyword id="KW-0964">Secreted</keyword>
<reference evidence="3" key="1">
    <citation type="journal article" date="1997" name="J. Biol. Chem.">
        <title>Differential extraction and protein sequencing reveals major differences in patterns of primary cell wall proteins from plants.</title>
        <authorList>
            <person name="Robertson D."/>
            <person name="Mitchell G.P."/>
            <person name="Gilroy J.S."/>
            <person name="Gerrish C."/>
            <person name="Bolwell G.P."/>
            <person name="Slabas A.R."/>
        </authorList>
    </citation>
    <scope>PROTEIN SEQUENCE</scope>
    <scope>SUBCELLULAR LOCATION</scope>
</reference>
<sequence length="20" mass="2274">SNPNFILTLVNNVPYTIWPA</sequence>
<organism>
    <name type="scientific">Solanum lycopersicum</name>
    <name type="common">Tomato</name>
    <name type="synonym">Lycopersicon esculentum</name>
    <dbReference type="NCBI Taxonomy" id="4081"/>
    <lineage>
        <taxon>Eukaryota</taxon>
        <taxon>Viridiplantae</taxon>
        <taxon>Streptophyta</taxon>
        <taxon>Embryophyta</taxon>
        <taxon>Tracheophyta</taxon>
        <taxon>Spermatophyta</taxon>
        <taxon>Magnoliopsida</taxon>
        <taxon>eudicotyledons</taxon>
        <taxon>Gunneridae</taxon>
        <taxon>Pentapetalae</taxon>
        <taxon>asterids</taxon>
        <taxon>lamiids</taxon>
        <taxon>Solanales</taxon>
        <taxon>Solanaceae</taxon>
        <taxon>Solanoideae</taxon>
        <taxon>Solaneae</taxon>
        <taxon>Solanum</taxon>
        <taxon>Solanum subgen. Lycopersicon</taxon>
    </lineage>
</organism>